<protein>
    <recommendedName>
        <fullName>Putative uncharacterized protein YLR159W</fullName>
    </recommendedName>
</protein>
<organism>
    <name type="scientific">Saccharomyces cerevisiae (strain ATCC 204508 / S288c)</name>
    <name type="common">Baker's yeast</name>
    <dbReference type="NCBI Taxonomy" id="559292"/>
    <lineage>
        <taxon>Eukaryota</taxon>
        <taxon>Fungi</taxon>
        <taxon>Dikarya</taxon>
        <taxon>Ascomycota</taxon>
        <taxon>Saccharomycotina</taxon>
        <taxon>Saccharomycetes</taxon>
        <taxon>Saccharomycetales</taxon>
        <taxon>Saccharomycetaceae</taxon>
        <taxon>Saccharomyces</taxon>
    </lineage>
</organism>
<comment type="miscellaneous">
    <text>There are 3 tandem-duplicated genes coding for this protein in S.cerevisiae (YLR156W, YLR159W and YLR161W). Additionally, a fourth copy has been disrupted by a Ty1 retrotransposon, which led to the prediction of the 2 dubious ORFs YLR157W-D and YLR157W-E.</text>
</comment>
<dbReference type="EMBL" id="U51921">
    <property type="protein sequence ID" value="AAB67483.1"/>
    <property type="molecule type" value="Genomic_DNA"/>
</dbReference>
<dbReference type="EMBL" id="AY557928">
    <property type="protein sequence ID" value="AAS56254.1"/>
    <property type="molecule type" value="Genomic_DNA"/>
</dbReference>
<dbReference type="EMBL" id="BK006945">
    <property type="protein sequence ID" value="DAA09479.1"/>
    <property type="molecule type" value="Genomic_DNA"/>
</dbReference>
<dbReference type="PIR" id="S68472">
    <property type="entry name" value="S68472"/>
</dbReference>
<dbReference type="RefSeq" id="NP_757337.1">
    <property type="nucleotide sequence ID" value="NM_001182043.1"/>
</dbReference>
<dbReference type="RefSeq" id="NP_757338.1">
    <property type="nucleotide sequence ID" value="NM_001182046.1"/>
</dbReference>
<dbReference type="RefSeq" id="NP_757339.1">
    <property type="nucleotide sequence ID" value="NM_001182048.1"/>
</dbReference>
<dbReference type="BioGRID" id="31427">
    <property type="interactions" value="30"/>
</dbReference>
<dbReference type="BioGRID" id="31432">
    <property type="interactions" value="43"/>
</dbReference>
<dbReference type="BioGRID" id="31434">
    <property type="interactions" value="2"/>
</dbReference>
<dbReference type="FunCoup" id="P0CE97">
    <property type="interactions" value="92"/>
</dbReference>
<dbReference type="EnsemblFungi" id="YLR156W_mRNA">
    <property type="protein sequence ID" value="YLR156W"/>
    <property type="gene ID" value="YLR156W"/>
</dbReference>
<dbReference type="EnsemblFungi" id="YLR159W_mRNA">
    <property type="protein sequence ID" value="YLR159W"/>
    <property type="gene ID" value="YLR159W"/>
</dbReference>
<dbReference type="EnsemblFungi" id="YLR161W_mRNA">
    <property type="protein sequence ID" value="YLR161W"/>
    <property type="gene ID" value="YLR161W"/>
</dbReference>
<dbReference type="GeneID" id="850856"/>
<dbReference type="KEGG" id="sce:YLR156W"/>
<dbReference type="KEGG" id="sce:YLR159W"/>
<dbReference type="KEGG" id="sce:YLR161W"/>
<dbReference type="AGR" id="SGD:S000004149"/>
<dbReference type="SGD" id="S000004149">
    <property type="gene designation" value="YLR159W"/>
</dbReference>
<dbReference type="VEuPathDB" id="FungiDB:YLR156W"/>
<dbReference type="VEuPathDB" id="FungiDB:YLR159W"/>
<dbReference type="VEuPathDB" id="FungiDB:YLR161W"/>
<dbReference type="HOGENOM" id="CLU_2122988_0_0_1"/>
<dbReference type="InParanoid" id="P0CE97"/>
<dbReference type="BioCyc" id="YEAST:G3O-32290-MONOMER"/>
<dbReference type="PRO" id="PR:P0CE97"/>
<dbReference type="Proteomes" id="UP000002311">
    <property type="component" value="Chromosome XII"/>
</dbReference>
<dbReference type="RNAct" id="P0CE97">
    <property type="molecule type" value="protein"/>
</dbReference>
<dbReference type="ExpressionAtlas" id="P0CE97">
    <property type="expression patterns" value="baseline"/>
</dbReference>
<feature type="chain" id="PRO_0000393295" description="Putative uncharacterized protein YLR159W">
    <location>
        <begin position="1"/>
        <end position="114"/>
    </location>
</feature>
<sequence length="114" mass="13138">MKFQYALAKEQLGSNSRSGVKKLISKHHWLPEYYFSDLSFSVVQQWDSRAIEKTTIISCMRPANQEIYPLRHCETLRSQPCSLFSSLYARSFQSSCTLHVAEPSPGFHMYGCHT</sequence>
<keyword id="KW-1185">Reference proteome</keyword>
<accession>P0CE97</accession>
<accession>D6VYF4</accession>
<accession>Q12478</accession>
<accession>Q8TGJ5</accession>
<accession>Q8TGJ6</accession>
<name>YL59W_YEAST</name>
<gene>
    <name type="ordered locus">YLR159W</name>
    <name type="ORF">L9632.4</name>
</gene>
<reference key="1">
    <citation type="journal article" date="1997" name="Nature">
        <title>The nucleotide sequence of Saccharomyces cerevisiae chromosome XII.</title>
        <authorList>
            <person name="Johnston M."/>
            <person name="Hillier L.W."/>
            <person name="Riles L."/>
            <person name="Albermann K."/>
            <person name="Andre B."/>
            <person name="Ansorge W."/>
            <person name="Benes V."/>
            <person name="Brueckner M."/>
            <person name="Delius H."/>
            <person name="Dubois E."/>
            <person name="Duesterhoeft A."/>
            <person name="Entian K.-D."/>
            <person name="Floeth M."/>
            <person name="Goffeau A."/>
            <person name="Hebling U."/>
            <person name="Heumann K."/>
            <person name="Heuss-Neitzel D."/>
            <person name="Hilbert H."/>
            <person name="Hilger F."/>
            <person name="Kleine K."/>
            <person name="Koetter P."/>
            <person name="Louis E.J."/>
            <person name="Messenguy F."/>
            <person name="Mewes H.-W."/>
            <person name="Miosga T."/>
            <person name="Moestl D."/>
            <person name="Mueller-Auer S."/>
            <person name="Nentwich U."/>
            <person name="Obermaier B."/>
            <person name="Piravandi E."/>
            <person name="Pohl T.M."/>
            <person name="Portetelle D."/>
            <person name="Purnelle B."/>
            <person name="Rechmann S."/>
            <person name="Rieger M."/>
            <person name="Rinke M."/>
            <person name="Rose M."/>
            <person name="Scharfe M."/>
            <person name="Scherens B."/>
            <person name="Scholler P."/>
            <person name="Schwager C."/>
            <person name="Schwarz S."/>
            <person name="Underwood A.P."/>
            <person name="Urrestarazu L.A."/>
            <person name="Vandenbol M."/>
            <person name="Verhasselt P."/>
            <person name="Vierendeels F."/>
            <person name="Voet M."/>
            <person name="Volckaert G."/>
            <person name="Voss H."/>
            <person name="Wambutt R."/>
            <person name="Wedler E."/>
            <person name="Wedler H."/>
            <person name="Zimmermann F.K."/>
            <person name="Zollner A."/>
            <person name="Hani J."/>
            <person name="Hoheisel J.D."/>
        </authorList>
    </citation>
    <scope>NUCLEOTIDE SEQUENCE [LARGE SCALE GENOMIC DNA]</scope>
    <source>
        <strain>ATCC 204508 / S288c</strain>
    </source>
</reference>
<reference key="2">
    <citation type="journal article" date="2014" name="G3 (Bethesda)">
        <title>The reference genome sequence of Saccharomyces cerevisiae: Then and now.</title>
        <authorList>
            <person name="Engel S.R."/>
            <person name="Dietrich F.S."/>
            <person name="Fisk D.G."/>
            <person name="Binkley G."/>
            <person name="Balakrishnan R."/>
            <person name="Costanzo M.C."/>
            <person name="Dwight S.S."/>
            <person name="Hitz B.C."/>
            <person name="Karra K."/>
            <person name="Nash R.S."/>
            <person name="Weng S."/>
            <person name="Wong E.D."/>
            <person name="Lloyd P."/>
            <person name="Skrzypek M.S."/>
            <person name="Miyasato S.R."/>
            <person name="Simison M."/>
            <person name="Cherry J.M."/>
        </authorList>
    </citation>
    <scope>GENOME REANNOTATION</scope>
    <source>
        <strain>ATCC 204508 / S288c</strain>
    </source>
</reference>
<reference key="3">
    <citation type="journal article" date="2007" name="Genome Res.">
        <title>Approaching a complete repository of sequence-verified protein-encoding clones for Saccharomyces cerevisiae.</title>
        <authorList>
            <person name="Hu Y."/>
            <person name="Rolfs A."/>
            <person name="Bhullar B."/>
            <person name="Murthy T.V.S."/>
            <person name="Zhu C."/>
            <person name="Berger M.F."/>
            <person name="Camargo A.A."/>
            <person name="Kelley F."/>
            <person name="McCarron S."/>
            <person name="Jepson D."/>
            <person name="Richardson A."/>
            <person name="Raphael J."/>
            <person name="Moreira D."/>
            <person name="Taycher E."/>
            <person name="Zuo D."/>
            <person name="Mohr S."/>
            <person name="Kane M.F."/>
            <person name="Williamson J."/>
            <person name="Simpson A.J.G."/>
            <person name="Bulyk M.L."/>
            <person name="Harlow E."/>
            <person name="Marsischky G."/>
            <person name="Kolodner R.D."/>
            <person name="LaBaer J."/>
        </authorList>
    </citation>
    <scope>NUCLEOTIDE SEQUENCE [GENOMIC DNA]</scope>
    <source>
        <strain>ATCC 204508 / S288c</strain>
    </source>
</reference>
<proteinExistence type="predicted"/>